<name>MNMG_CARHZ</name>
<proteinExistence type="inferred from homology"/>
<reference key="1">
    <citation type="journal article" date="2005" name="PLoS Genet.">
        <title>Life in hot carbon monoxide: the complete genome sequence of Carboxydothermus hydrogenoformans Z-2901.</title>
        <authorList>
            <person name="Wu M."/>
            <person name="Ren Q."/>
            <person name="Durkin A.S."/>
            <person name="Daugherty S.C."/>
            <person name="Brinkac L.M."/>
            <person name="Dodson R.J."/>
            <person name="Madupu R."/>
            <person name="Sullivan S.A."/>
            <person name="Kolonay J.F."/>
            <person name="Nelson W.C."/>
            <person name="Tallon L.J."/>
            <person name="Jones K.M."/>
            <person name="Ulrich L.E."/>
            <person name="Gonzalez J.M."/>
            <person name="Zhulin I.B."/>
            <person name="Robb F.T."/>
            <person name="Eisen J.A."/>
        </authorList>
    </citation>
    <scope>NUCLEOTIDE SEQUENCE [LARGE SCALE GENOMIC DNA]</scope>
    <source>
        <strain>ATCC BAA-161 / DSM 6008 / Z-2901</strain>
    </source>
</reference>
<organism>
    <name type="scientific">Carboxydothermus hydrogenoformans (strain ATCC BAA-161 / DSM 6008 / Z-2901)</name>
    <dbReference type="NCBI Taxonomy" id="246194"/>
    <lineage>
        <taxon>Bacteria</taxon>
        <taxon>Bacillati</taxon>
        <taxon>Bacillota</taxon>
        <taxon>Clostridia</taxon>
        <taxon>Thermoanaerobacterales</taxon>
        <taxon>Thermoanaerobacteraceae</taxon>
        <taxon>Carboxydothermus</taxon>
    </lineage>
</organism>
<evidence type="ECO:0000255" key="1">
    <source>
        <dbReference type="HAMAP-Rule" id="MF_00129"/>
    </source>
</evidence>
<protein>
    <recommendedName>
        <fullName evidence="1">tRNA uridine 5-carboxymethylaminomethyl modification enzyme MnmG</fullName>
    </recommendedName>
    <alternativeName>
        <fullName evidence="1">Glucose-inhibited division protein A</fullName>
    </alternativeName>
</protein>
<feature type="chain" id="PRO_1000071413" description="tRNA uridine 5-carboxymethylaminomethyl modification enzyme MnmG">
    <location>
        <begin position="1"/>
        <end position="631"/>
    </location>
</feature>
<feature type="binding site" evidence="1">
    <location>
        <begin position="14"/>
        <end position="19"/>
    </location>
    <ligand>
        <name>FAD</name>
        <dbReference type="ChEBI" id="CHEBI:57692"/>
    </ligand>
</feature>
<feature type="binding site" evidence="1">
    <location>
        <begin position="273"/>
        <end position="287"/>
    </location>
    <ligand>
        <name>NAD(+)</name>
        <dbReference type="ChEBI" id="CHEBI:57540"/>
    </ligand>
</feature>
<keyword id="KW-0963">Cytoplasm</keyword>
<keyword id="KW-0274">FAD</keyword>
<keyword id="KW-0285">Flavoprotein</keyword>
<keyword id="KW-0520">NAD</keyword>
<keyword id="KW-1185">Reference proteome</keyword>
<keyword id="KW-0819">tRNA processing</keyword>
<dbReference type="EMBL" id="CP000141">
    <property type="protein sequence ID" value="ABB14353.1"/>
    <property type="molecule type" value="Genomic_DNA"/>
</dbReference>
<dbReference type="RefSeq" id="WP_011342955.1">
    <property type="nucleotide sequence ID" value="NC_007503.1"/>
</dbReference>
<dbReference type="SMR" id="Q3AG55"/>
<dbReference type="FunCoup" id="Q3AG55">
    <property type="interactions" value="455"/>
</dbReference>
<dbReference type="STRING" id="246194.CHY_0007"/>
<dbReference type="KEGG" id="chy:CHY_0007"/>
<dbReference type="eggNOG" id="COG0445">
    <property type="taxonomic scope" value="Bacteria"/>
</dbReference>
<dbReference type="HOGENOM" id="CLU_007831_2_2_9"/>
<dbReference type="InParanoid" id="Q3AG55"/>
<dbReference type="OrthoDB" id="9815560at2"/>
<dbReference type="Proteomes" id="UP000002706">
    <property type="component" value="Chromosome"/>
</dbReference>
<dbReference type="GO" id="GO:0005829">
    <property type="term" value="C:cytosol"/>
    <property type="evidence" value="ECO:0007669"/>
    <property type="project" value="TreeGrafter"/>
</dbReference>
<dbReference type="GO" id="GO:0050660">
    <property type="term" value="F:flavin adenine dinucleotide binding"/>
    <property type="evidence" value="ECO:0007669"/>
    <property type="project" value="UniProtKB-UniRule"/>
</dbReference>
<dbReference type="GO" id="GO:0030488">
    <property type="term" value="P:tRNA methylation"/>
    <property type="evidence" value="ECO:0007669"/>
    <property type="project" value="TreeGrafter"/>
</dbReference>
<dbReference type="GO" id="GO:0002098">
    <property type="term" value="P:tRNA wobble uridine modification"/>
    <property type="evidence" value="ECO:0007669"/>
    <property type="project" value="InterPro"/>
</dbReference>
<dbReference type="FunFam" id="1.10.10.1800:FF:000001">
    <property type="entry name" value="tRNA uridine 5-carboxymethylaminomethyl modification enzyme MnmG"/>
    <property type="match status" value="1"/>
</dbReference>
<dbReference type="FunFam" id="1.10.150.570:FF:000001">
    <property type="entry name" value="tRNA uridine 5-carboxymethylaminomethyl modification enzyme MnmG"/>
    <property type="match status" value="1"/>
</dbReference>
<dbReference type="FunFam" id="3.50.50.60:FF:000002">
    <property type="entry name" value="tRNA uridine 5-carboxymethylaminomethyl modification enzyme MnmG"/>
    <property type="match status" value="1"/>
</dbReference>
<dbReference type="FunFam" id="3.50.50.60:FF:000063">
    <property type="entry name" value="tRNA uridine 5-carboxymethylaminomethyl modification enzyme MnmG"/>
    <property type="match status" value="1"/>
</dbReference>
<dbReference type="Gene3D" id="3.50.50.60">
    <property type="entry name" value="FAD/NAD(P)-binding domain"/>
    <property type="match status" value="2"/>
</dbReference>
<dbReference type="Gene3D" id="1.10.150.570">
    <property type="entry name" value="GidA associated domain, C-terminal subdomain"/>
    <property type="match status" value="1"/>
</dbReference>
<dbReference type="Gene3D" id="1.10.10.1800">
    <property type="entry name" value="tRNA uridine 5-carboxymethylaminomethyl modification enzyme MnmG/GidA"/>
    <property type="match status" value="1"/>
</dbReference>
<dbReference type="HAMAP" id="MF_00129">
    <property type="entry name" value="MnmG_GidA"/>
    <property type="match status" value="1"/>
</dbReference>
<dbReference type="InterPro" id="IPR036188">
    <property type="entry name" value="FAD/NAD-bd_sf"/>
</dbReference>
<dbReference type="InterPro" id="IPR049312">
    <property type="entry name" value="GIDA_C_N"/>
</dbReference>
<dbReference type="InterPro" id="IPR004416">
    <property type="entry name" value="MnmG"/>
</dbReference>
<dbReference type="InterPro" id="IPR002218">
    <property type="entry name" value="MnmG-rel"/>
</dbReference>
<dbReference type="InterPro" id="IPR020595">
    <property type="entry name" value="MnmG-rel_CS"/>
</dbReference>
<dbReference type="InterPro" id="IPR026904">
    <property type="entry name" value="MnmG_C"/>
</dbReference>
<dbReference type="InterPro" id="IPR047001">
    <property type="entry name" value="MnmG_C_subdom"/>
</dbReference>
<dbReference type="InterPro" id="IPR044920">
    <property type="entry name" value="MnmG_C_subdom_sf"/>
</dbReference>
<dbReference type="InterPro" id="IPR040131">
    <property type="entry name" value="MnmG_N"/>
</dbReference>
<dbReference type="NCBIfam" id="TIGR00136">
    <property type="entry name" value="mnmG_gidA"/>
    <property type="match status" value="1"/>
</dbReference>
<dbReference type="PANTHER" id="PTHR11806">
    <property type="entry name" value="GLUCOSE INHIBITED DIVISION PROTEIN A"/>
    <property type="match status" value="1"/>
</dbReference>
<dbReference type="PANTHER" id="PTHR11806:SF0">
    <property type="entry name" value="PROTEIN MTO1 HOMOLOG, MITOCHONDRIAL"/>
    <property type="match status" value="1"/>
</dbReference>
<dbReference type="Pfam" id="PF01134">
    <property type="entry name" value="GIDA"/>
    <property type="match status" value="1"/>
</dbReference>
<dbReference type="Pfam" id="PF21680">
    <property type="entry name" value="GIDA_C_1st"/>
    <property type="match status" value="1"/>
</dbReference>
<dbReference type="Pfam" id="PF13932">
    <property type="entry name" value="SAM_GIDA_C"/>
    <property type="match status" value="1"/>
</dbReference>
<dbReference type="SMART" id="SM01228">
    <property type="entry name" value="GIDA_assoc_3"/>
    <property type="match status" value="1"/>
</dbReference>
<dbReference type="SUPFAM" id="SSF51905">
    <property type="entry name" value="FAD/NAD(P)-binding domain"/>
    <property type="match status" value="1"/>
</dbReference>
<dbReference type="PROSITE" id="PS01280">
    <property type="entry name" value="GIDA_1"/>
    <property type="match status" value="1"/>
</dbReference>
<dbReference type="PROSITE" id="PS01281">
    <property type="entry name" value="GIDA_2"/>
    <property type="match status" value="1"/>
</dbReference>
<gene>
    <name evidence="1" type="primary">mnmG</name>
    <name evidence="1" type="synonym">gidA</name>
    <name type="ordered locus">CHY_0007</name>
</gene>
<comment type="function">
    <text evidence="1">NAD-binding protein involved in the addition of a carboxymethylaminomethyl (cmnm) group at the wobble position (U34) of certain tRNAs, forming tRNA-cmnm(5)s(2)U34.</text>
</comment>
<comment type="cofactor">
    <cofactor evidence="1">
        <name>FAD</name>
        <dbReference type="ChEBI" id="CHEBI:57692"/>
    </cofactor>
</comment>
<comment type="subunit">
    <text evidence="1">Homodimer. Heterotetramer of two MnmE and two MnmG subunits.</text>
</comment>
<comment type="subcellular location">
    <subcellularLocation>
        <location evidence="1">Cytoplasm</location>
    </subcellularLocation>
</comment>
<comment type="similarity">
    <text evidence="1">Belongs to the MnmG family.</text>
</comment>
<sequence>MEYHAGDYDVIVVGAGHAGVEAALASARMGLKTLLLTLSLDNVALMPCNPAVGGPAKGVVVREVDALGGEMGINTDKTYIQIRMLNTGKGPAVRTLRAQADKRRYQEEMKKTIERQENLYLKQAETIKILVEGEKVRGVLTRTGAVFTSRAVVVTSGTYLNSRIIIGDVHYPSGPAGFPYASLLSKSLADLGFKLGRFKTGTPARVDKRTVDFSKMIEQPGDDRPLYFSYMSEGIKRPNVSCWLTYTNLETHTIILENLHRSPLYSGEIKGVGPRYCPSIEDKVVRFSDKPRHQVFLEPEGLDTYEMYVQGMSTSLPEDLQIKMLRTLPGLERVEIMRPAYAIEYDYIDPTQLKLTLEAKHIQGLFFAGQINGTSGYEEAAGQGIVAGINAALYVKEKEPFILKRSEAYIGVMIDDLVTKGVTDPYRLLTSRAEYRLLLRHDNADLRLTEKGYKIGLVTEERWRKFNERVEKINKLMEFLEENQVTPTKRNLEIMEEYGTSPPKHGISGKEFLRRPEINMEAIEKIFAIDGQFPDDVKEQVEILVKYEGYIEKQLKEIERFNKYEGKKLPPDFDYSKVKGLSAEAVQKLNAIKPENIGQASRVSGVTPADISVLLIYLESRKSEDNNGSEA</sequence>
<accession>Q3AG55</accession>